<comment type="function">
    <text evidence="5 6 7">Essential protease involved in epiderm development. Required for aleurone cell development in the endosperm probably by maintaining and restricting the aleurone and embryonic epidermal L1 cell-layer fates as well as meristems organization. Involved in the maintenance of adaxial/abaxial axis information in developing leaves, probably by regulating cell proliferation and expansion. Does not need calcium ions to be active.</text>
</comment>
<comment type="subcellular location">
    <subcellularLocation>
        <location evidence="1">Endoplasmic reticulum membrane</location>
        <topology evidence="1">Multi-pass membrane protein</topology>
    </subcellularLocation>
    <subcellularLocation>
        <location evidence="1">Cytoplasm</location>
    </subcellularLocation>
    <subcellularLocation>
        <location evidence="1">Cell membrane</location>
        <topology evidence="1">Multi-pass membrane protein</topology>
    </subcellularLocation>
    <subcellularLocation>
        <location evidence="1">Endosome membrane</location>
        <topology evidence="1">Multi-pass membrane protein</topology>
    </subcellularLocation>
</comment>
<comment type="tissue specificity">
    <text evidence="6">Ubiquitously expressed with higher levels in embryos, vasculatures, leaf primordia, leaf margins, and shoot apical meristem (SAM).</text>
</comment>
<comment type="domain">
    <text evidence="1">The transmembrane regions are not required for calpain activity but may play regulatory roles.</text>
</comment>
<comment type="PTM">
    <text evidence="1">Autocatalytic proteolytic cleavage leading to the production of mainly cytoplasmic localized subproducts of about 85 and 120 kDa.</text>
</comment>
<comment type="disruption phenotype">
    <text evidence="5 6 7">Abnormal embryos arrested at the globular stage with an abnormal aleurone layer on the ventral side.</text>
</comment>
<comment type="miscellaneous">
    <text evidence="1">Although homology to other calpains is high within the protease domain, the lack of calcium-binding sites suggests that this protein is a protease that may not be activated by calcium ions.</text>
</comment>
<comment type="similarity">
    <text evidence="8">Belongs to the peptidase C2 family.</text>
</comment>
<organism>
    <name type="scientific">Oryza sativa subsp. japonica</name>
    <name type="common">Rice</name>
    <dbReference type="NCBI Taxonomy" id="39947"/>
    <lineage>
        <taxon>Eukaryota</taxon>
        <taxon>Viridiplantae</taxon>
        <taxon>Streptophyta</taxon>
        <taxon>Embryophyta</taxon>
        <taxon>Tracheophyta</taxon>
        <taxon>Spermatophyta</taxon>
        <taxon>Magnoliopsida</taxon>
        <taxon>Liliopsida</taxon>
        <taxon>Poales</taxon>
        <taxon>Poaceae</taxon>
        <taxon>BOP clade</taxon>
        <taxon>Oryzoideae</taxon>
        <taxon>Oryzeae</taxon>
        <taxon>Oryzinae</taxon>
        <taxon>Oryza</taxon>
        <taxon>Oryza sativa</taxon>
    </lineage>
</organism>
<name>DEK1_ORYSJ</name>
<accession>Q6ZFZ4</accession>
<accession>Q8RYA5</accession>
<proteinExistence type="evidence at protein level"/>
<dbReference type="EC" id="3.4.22.-"/>
<dbReference type="EMBL" id="AB477099">
    <property type="protein sequence ID" value="BAI44850.1"/>
    <property type="molecule type" value="mRNA"/>
</dbReference>
<dbReference type="EMBL" id="AY062272">
    <property type="protein sequence ID" value="AAL38190.1"/>
    <property type="molecule type" value="mRNA"/>
</dbReference>
<dbReference type="EMBL" id="AP004161">
    <property type="protein sequence ID" value="BAD07761.1"/>
    <property type="molecule type" value="Genomic_DNA"/>
</dbReference>
<dbReference type="EMBL" id="AP008208">
    <property type="protein sequence ID" value="BAF09804.1"/>
    <property type="molecule type" value="Genomic_DNA"/>
</dbReference>
<dbReference type="EMBL" id="AP014958">
    <property type="status" value="NOT_ANNOTATED_CDS"/>
    <property type="molecule type" value="Genomic_DNA"/>
</dbReference>
<dbReference type="RefSeq" id="XP_015625425.1">
    <property type="nucleotide sequence ID" value="XM_015769939.1"/>
</dbReference>
<dbReference type="RefSeq" id="XP_015625426.1">
    <property type="nucleotide sequence ID" value="XM_015769940.1"/>
</dbReference>
<dbReference type="SMR" id="Q6ZFZ4"/>
<dbReference type="FunCoup" id="Q6ZFZ4">
    <property type="interactions" value="684"/>
</dbReference>
<dbReference type="STRING" id="39947.Q6ZFZ4"/>
<dbReference type="MEROPS" id="C02.019"/>
<dbReference type="iPTMnet" id="Q6ZFZ4"/>
<dbReference type="PaxDb" id="39947-Q6ZFZ4"/>
<dbReference type="EnsemblPlants" id="Os02t0709400-01">
    <property type="protein sequence ID" value="Os02t0709400-01"/>
    <property type="gene ID" value="Os02g0709400"/>
</dbReference>
<dbReference type="GeneID" id="4330484"/>
<dbReference type="Gramene" id="Os02t0709400-01">
    <property type="protein sequence ID" value="Os02t0709400-01"/>
    <property type="gene ID" value="Os02g0709400"/>
</dbReference>
<dbReference type="KEGG" id="dosa:Os02g0709400"/>
<dbReference type="KEGG" id="osa:4330484"/>
<dbReference type="eggNOG" id="KOG0045">
    <property type="taxonomic scope" value="Eukaryota"/>
</dbReference>
<dbReference type="InParanoid" id="Q6ZFZ4"/>
<dbReference type="OrthoDB" id="424753at2759"/>
<dbReference type="PlantReactome" id="R-OSA-9627657">
    <property type="pathway name" value="Regulation of leaf development"/>
</dbReference>
<dbReference type="Proteomes" id="UP000000763">
    <property type="component" value="Chromosome 2"/>
</dbReference>
<dbReference type="Proteomes" id="UP000059680">
    <property type="component" value="Chromosome 2"/>
</dbReference>
<dbReference type="GO" id="GO:0005737">
    <property type="term" value="C:cytoplasm"/>
    <property type="evidence" value="ECO:0000250"/>
    <property type="project" value="UniProtKB"/>
</dbReference>
<dbReference type="GO" id="GO:0005789">
    <property type="term" value="C:endoplasmic reticulum membrane"/>
    <property type="evidence" value="ECO:0000250"/>
    <property type="project" value="UniProtKB"/>
</dbReference>
<dbReference type="GO" id="GO:0010008">
    <property type="term" value="C:endosome membrane"/>
    <property type="evidence" value="ECO:0000250"/>
    <property type="project" value="UniProtKB"/>
</dbReference>
<dbReference type="GO" id="GO:0005886">
    <property type="term" value="C:plasma membrane"/>
    <property type="evidence" value="ECO:0000250"/>
    <property type="project" value="UniProtKB"/>
</dbReference>
<dbReference type="GO" id="GO:0004198">
    <property type="term" value="F:calcium-dependent cysteine-type endopeptidase activity"/>
    <property type="evidence" value="ECO:0007669"/>
    <property type="project" value="InterPro"/>
</dbReference>
<dbReference type="GO" id="GO:0008234">
    <property type="term" value="F:cysteine-type peptidase activity"/>
    <property type="evidence" value="ECO:0000250"/>
    <property type="project" value="UniProtKB"/>
</dbReference>
<dbReference type="GO" id="GO:0009793">
    <property type="term" value="P:embryo development ending in seed dormancy"/>
    <property type="evidence" value="ECO:0000250"/>
    <property type="project" value="UniProtKB"/>
</dbReference>
<dbReference type="GO" id="GO:0090628">
    <property type="term" value="P:plant epidermal cell fate specification"/>
    <property type="evidence" value="ECO:0000250"/>
    <property type="project" value="UniProtKB"/>
</dbReference>
<dbReference type="GO" id="GO:2000011">
    <property type="term" value="P:regulation of adaxial/abaxial pattern formation"/>
    <property type="evidence" value="ECO:0000315"/>
    <property type="project" value="UniProtKB"/>
</dbReference>
<dbReference type="GO" id="GO:0001558">
    <property type="term" value="P:regulation of cell growth"/>
    <property type="evidence" value="ECO:0000250"/>
    <property type="project" value="UniProtKB"/>
</dbReference>
<dbReference type="GO" id="GO:0042127">
    <property type="term" value="P:regulation of cell population proliferation"/>
    <property type="evidence" value="ECO:0000250"/>
    <property type="project" value="UniProtKB"/>
</dbReference>
<dbReference type="GO" id="GO:2000014">
    <property type="term" value="P:regulation of endosperm development"/>
    <property type="evidence" value="ECO:0000250"/>
    <property type="project" value="UniProtKB"/>
</dbReference>
<dbReference type="GO" id="GO:2000024">
    <property type="term" value="P:regulation of leaf development"/>
    <property type="evidence" value="ECO:0000315"/>
    <property type="project" value="UniProtKB"/>
</dbReference>
<dbReference type="GO" id="GO:0009934">
    <property type="term" value="P:regulation of meristem structural organization"/>
    <property type="evidence" value="ECO:0000315"/>
    <property type="project" value="UniProtKB"/>
</dbReference>
<dbReference type="GO" id="GO:0040014">
    <property type="term" value="P:regulation of multicellular organism growth"/>
    <property type="evidence" value="ECO:0007669"/>
    <property type="project" value="EnsemblPlants"/>
</dbReference>
<dbReference type="GO" id="GO:0097264">
    <property type="term" value="P:self proteolysis"/>
    <property type="evidence" value="ECO:0000250"/>
    <property type="project" value="UniProtKB"/>
</dbReference>
<dbReference type="CDD" id="cd00044">
    <property type="entry name" value="CysPc"/>
    <property type="match status" value="1"/>
</dbReference>
<dbReference type="FunFam" id="2.60.120.200:FF:000165">
    <property type="entry name" value="Calpain-type cysteine protease DEK1"/>
    <property type="match status" value="1"/>
</dbReference>
<dbReference type="FunFam" id="3.90.70.10:FF:000038">
    <property type="entry name" value="Calpain-type cysteine protease DEK1"/>
    <property type="match status" value="1"/>
</dbReference>
<dbReference type="FunFam" id="2.60.120.380:FF:000005">
    <property type="entry name" value="calpain-type cysteine protease DEK1"/>
    <property type="match status" value="1"/>
</dbReference>
<dbReference type="Gene3D" id="2.60.120.200">
    <property type="match status" value="1"/>
</dbReference>
<dbReference type="Gene3D" id="2.60.120.380">
    <property type="match status" value="1"/>
</dbReference>
<dbReference type="Gene3D" id="3.90.70.10">
    <property type="entry name" value="Cysteine proteinases"/>
    <property type="match status" value="1"/>
</dbReference>
<dbReference type="InterPro" id="IPR022684">
    <property type="entry name" value="Calpain_cysteine_protease"/>
</dbReference>
<dbReference type="InterPro" id="IPR022682">
    <property type="entry name" value="Calpain_domain_III"/>
</dbReference>
<dbReference type="InterPro" id="IPR022683">
    <property type="entry name" value="Calpain_III"/>
</dbReference>
<dbReference type="InterPro" id="IPR036213">
    <property type="entry name" value="Calpain_III_sf"/>
</dbReference>
<dbReference type="InterPro" id="IPR013320">
    <property type="entry name" value="ConA-like_dom_sf"/>
</dbReference>
<dbReference type="InterPro" id="IPR038765">
    <property type="entry name" value="Papain-like_cys_pep_sf"/>
</dbReference>
<dbReference type="InterPro" id="IPR000169">
    <property type="entry name" value="Pept_cys_AS"/>
</dbReference>
<dbReference type="InterPro" id="IPR001300">
    <property type="entry name" value="Peptidase_C2_calpain_cat"/>
</dbReference>
<dbReference type="PANTHER" id="PTHR10183">
    <property type="entry name" value="CALPAIN"/>
    <property type="match status" value="1"/>
</dbReference>
<dbReference type="PANTHER" id="PTHR10183:SF379">
    <property type="entry name" value="CALPAIN-5"/>
    <property type="match status" value="1"/>
</dbReference>
<dbReference type="Pfam" id="PF01067">
    <property type="entry name" value="Calpain_III"/>
    <property type="match status" value="1"/>
</dbReference>
<dbReference type="Pfam" id="PF00648">
    <property type="entry name" value="Peptidase_C2"/>
    <property type="match status" value="1"/>
</dbReference>
<dbReference type="PRINTS" id="PR00704">
    <property type="entry name" value="CALPAIN"/>
</dbReference>
<dbReference type="SMART" id="SM00720">
    <property type="entry name" value="calpain_III"/>
    <property type="match status" value="1"/>
</dbReference>
<dbReference type="SMART" id="SM00230">
    <property type="entry name" value="CysPc"/>
    <property type="match status" value="1"/>
</dbReference>
<dbReference type="SUPFAM" id="SSF49758">
    <property type="entry name" value="Calpain large subunit, middle domain (domain III)"/>
    <property type="match status" value="1"/>
</dbReference>
<dbReference type="SUPFAM" id="SSF49899">
    <property type="entry name" value="Concanavalin A-like lectins/glucanases"/>
    <property type="match status" value="1"/>
</dbReference>
<dbReference type="SUPFAM" id="SSF54001">
    <property type="entry name" value="Cysteine proteinases"/>
    <property type="match status" value="1"/>
</dbReference>
<dbReference type="PROSITE" id="PS50203">
    <property type="entry name" value="CALPAIN_CAT"/>
    <property type="match status" value="1"/>
</dbReference>
<dbReference type="PROSITE" id="PS00139">
    <property type="entry name" value="THIOL_PROTEASE_CYS"/>
    <property type="match status" value="1"/>
</dbReference>
<feature type="signal peptide" evidence="2">
    <location>
        <begin position="1"/>
        <end position="33"/>
    </location>
</feature>
<feature type="chain" id="PRO_0000423441" description="Calpain-type cysteine protease ADL1">
    <location>
        <begin position="34"/>
        <end position="2162"/>
    </location>
</feature>
<feature type="propeptide" id="PRO_0000423442" evidence="1">
    <location>
        <begin position="34"/>
        <end status="unknown"/>
    </location>
</feature>
<feature type="topological domain" description="Extracellular" evidence="2">
    <location>
        <begin position="34"/>
        <end position="70"/>
    </location>
</feature>
<feature type="transmembrane region" description="Helical; Name=1" evidence="2">
    <location>
        <begin position="71"/>
        <end position="91"/>
    </location>
</feature>
<feature type="topological domain" description="Cytoplasmic" evidence="2">
    <location>
        <begin position="92"/>
        <end position="95"/>
    </location>
</feature>
<feature type="transmembrane region" description="Helical; Name=2" evidence="2">
    <location>
        <begin position="96"/>
        <end position="116"/>
    </location>
</feature>
<feature type="topological domain" description="Extracellular" evidence="2">
    <location>
        <begin position="117"/>
        <end position="127"/>
    </location>
</feature>
<feature type="transmembrane region" description="Helical; Name=3" evidence="2">
    <location>
        <begin position="128"/>
        <end position="148"/>
    </location>
</feature>
<feature type="topological domain" description="Cytoplasmic" evidence="2">
    <location>
        <begin position="149"/>
        <end position="164"/>
    </location>
</feature>
<feature type="transmembrane region" description="Helical; Name=4" evidence="2">
    <location>
        <begin position="165"/>
        <end position="185"/>
    </location>
</feature>
<feature type="topological domain" description="Extracellular" evidence="2">
    <location>
        <begin position="186"/>
        <end position="236"/>
    </location>
</feature>
<feature type="transmembrane region" description="Helical; Name=5" evidence="2">
    <location>
        <begin position="237"/>
        <end position="257"/>
    </location>
</feature>
<feature type="topological domain" description="Cytoplasmic" evidence="2">
    <location>
        <begin position="258"/>
        <end position="264"/>
    </location>
</feature>
<feature type="transmembrane region" description="Helical; Name=6" evidence="2">
    <location>
        <begin position="265"/>
        <end position="285"/>
    </location>
</feature>
<feature type="topological domain" description="Extracellular" evidence="2">
    <location>
        <begin position="286"/>
        <end position="294"/>
    </location>
</feature>
<feature type="transmembrane region" description="Helical; Name=7" evidence="2">
    <location>
        <begin position="295"/>
        <end position="315"/>
    </location>
</feature>
<feature type="topological domain" description="Cytoplasmic" evidence="2">
    <location>
        <begin position="316"/>
        <end position="320"/>
    </location>
</feature>
<feature type="transmembrane region" description="Helical; Name=8" evidence="2">
    <location>
        <begin position="321"/>
        <end position="341"/>
    </location>
</feature>
<feature type="topological domain" description="Extracellular" evidence="2">
    <location>
        <begin position="342"/>
        <end position="626"/>
    </location>
</feature>
<feature type="transmembrane region" description="Helical; Name=9" evidence="2">
    <location>
        <begin position="627"/>
        <end position="647"/>
    </location>
</feature>
<feature type="topological domain" description="Cytoplasmic" evidence="2">
    <location>
        <begin position="648"/>
        <end position="663"/>
    </location>
</feature>
<feature type="transmembrane region" description="Helical; Name=10" evidence="2">
    <location>
        <begin position="664"/>
        <end position="684"/>
    </location>
</feature>
<feature type="topological domain" description="Extracellular" evidence="2">
    <location>
        <begin position="685"/>
        <end position="697"/>
    </location>
</feature>
<feature type="transmembrane region" description="Helical; Name=11" evidence="2">
    <location>
        <begin position="698"/>
        <end position="718"/>
    </location>
</feature>
<feature type="topological domain" description="Cytoplasmic" evidence="2">
    <location>
        <begin position="719"/>
        <end position="722"/>
    </location>
</feature>
<feature type="transmembrane region" description="Helical; Name=12" evidence="2">
    <location>
        <begin position="723"/>
        <end position="743"/>
    </location>
</feature>
<feature type="topological domain" description="Extracellular" evidence="2">
    <location>
        <begin position="744"/>
        <end position="773"/>
    </location>
</feature>
<feature type="transmembrane region" description="Helical; Name=13" evidence="2">
    <location>
        <begin position="774"/>
        <end position="794"/>
    </location>
</feature>
<feature type="topological domain" description="Cytoplasmic" evidence="2">
    <location>
        <begin position="795"/>
        <end position="825"/>
    </location>
</feature>
<feature type="transmembrane region" description="Helical; Name=14" evidence="2">
    <location>
        <begin position="826"/>
        <end position="846"/>
    </location>
</feature>
<feature type="topological domain" description="Extracellular" evidence="2">
    <location>
        <begin position="847"/>
        <end position="856"/>
    </location>
</feature>
<feature type="transmembrane region" description="Helical; Name=15" evidence="2">
    <location>
        <begin position="857"/>
        <end position="877"/>
    </location>
</feature>
<feature type="topological domain" description="Cytoplasmic" evidence="2">
    <location>
        <begin position="878"/>
        <end position="890"/>
    </location>
</feature>
<feature type="transmembrane region" description="Helical; Name=16" evidence="2">
    <location>
        <begin position="891"/>
        <end position="911"/>
    </location>
</feature>
<feature type="topological domain" description="Extracellular" evidence="2">
    <location>
        <begin position="912"/>
        <end position="924"/>
    </location>
</feature>
<feature type="transmembrane region" description="Helical; Name=17" evidence="2">
    <location>
        <begin position="925"/>
        <end position="945"/>
    </location>
</feature>
<feature type="topological domain" description="Cytoplasmic" evidence="2">
    <location>
        <begin position="946"/>
        <end position="949"/>
    </location>
</feature>
<feature type="transmembrane region" description="Helical; Name=18" evidence="2">
    <location>
        <begin position="950"/>
        <end position="970"/>
    </location>
</feature>
<feature type="topological domain" description="Extracellular" evidence="2">
    <location>
        <begin position="971"/>
        <end position="984"/>
    </location>
</feature>
<feature type="transmembrane region" description="Helical; Name=19" evidence="2">
    <location>
        <begin position="985"/>
        <end position="1005"/>
    </location>
</feature>
<feature type="topological domain" description="Cytoplasmic" evidence="2">
    <location>
        <begin position="1006"/>
        <end position="1019"/>
    </location>
</feature>
<feature type="transmembrane region" description="Helical; Name=20" evidence="2">
    <location>
        <begin position="1020"/>
        <end position="1040"/>
    </location>
</feature>
<feature type="topological domain" description="Extracellular" evidence="2">
    <location>
        <begin position="1041"/>
        <end position="1063"/>
    </location>
</feature>
<feature type="transmembrane region" description="Helical; Name=21" evidence="2">
    <location>
        <begin position="1064"/>
        <end position="1084"/>
    </location>
</feature>
<feature type="topological domain" description="Cytoplasmic" evidence="2">
    <location>
        <begin position="1085"/>
        <end position="2162"/>
    </location>
</feature>
<feature type="domain" description="Calpain catalytic 1" evidence="3">
    <location>
        <begin position="1418"/>
        <end position="1611"/>
    </location>
</feature>
<feature type="domain" description="Calpain catalytic 2" evidence="3">
    <location>
        <begin position="1706"/>
        <end position="2008"/>
    </location>
</feature>
<feature type="region of interest" description="Disordered" evidence="4">
    <location>
        <begin position="366"/>
        <end position="403"/>
    </location>
</feature>
<feature type="compositionally biased region" description="Low complexity" evidence="4">
    <location>
        <begin position="370"/>
        <end position="381"/>
    </location>
</feature>
<feature type="active site" evidence="1">
    <location>
        <position position="1772"/>
    </location>
</feature>
<feature type="active site" evidence="1">
    <location>
        <position position="1930"/>
    </location>
</feature>
<feature type="active site" evidence="1">
    <location>
        <position position="1950"/>
    </location>
</feature>
<feature type="modified residue" description="Phosphoserine" evidence="1">
    <location>
        <position position="1372"/>
    </location>
</feature>
<feature type="modified residue" description="Phosphoserine" evidence="1">
    <location>
        <position position="1377"/>
    </location>
</feature>
<feature type="modified residue" description="Phosphoserine" evidence="1">
    <location>
        <position position="1668"/>
    </location>
</feature>
<feature type="mutagenesis site" description="In adl1-s1 and shl3-1; deletion of the apical region including the shoot apical meristem (SAM), coleoptile, and scutellum in embryos, and no clear root organization." evidence="5">
    <original>S</original>
    <variation>N</variation>
    <location>
        <position position="1776"/>
    </location>
</feature>
<feature type="mutagenesis site" description="In adl1-2; abaxially rolled leaves covered with bulliform-like cells, which are normally distributed only on the adaxial surface; this adaxialization concerns both epidermal and mesophyll tissues. Larger L1 cells in shoot apical meristems (SAM).">
    <original>A</original>
    <variation>V</variation>
    <location>
        <position position="1777"/>
    </location>
</feature>
<feature type="mutagenesis site" description="In adl1-g1 and odm-63; abnormal embryos arrested at the globular stage with an abnormal aleurone layer on the ventral side." evidence="7">
    <original>W</original>
    <variation>R</variation>
    <location>
        <position position="1841"/>
    </location>
</feature>
<feature type="mutagenesis site" description="In adl1-1; abaxially rolled leaves covered with bulliform-like cells, which are normally distributed only on the adaxial surface; this adaxialization concerns both epidermal and mesophyll tissues. Larger L1 cells in shoot apical meristems (SAM).">
    <original>G</original>
    <variation>R</variation>
    <location>
        <position position="2110"/>
    </location>
</feature>
<feature type="sequence conflict" description="In Ref. 2; AAL38190." evidence="8" ref="2">
    <original>Y</original>
    <variation>F</variation>
    <location>
        <position position="42"/>
    </location>
</feature>
<feature type="sequence conflict" description="In Ref. 2; AAL38190." evidence="8" ref="2">
    <original>L</original>
    <variation>F</variation>
    <location>
        <position position="713"/>
    </location>
</feature>
<keyword id="KW-1003">Cell membrane</keyword>
<keyword id="KW-0963">Cytoplasm</keyword>
<keyword id="KW-0217">Developmental protein</keyword>
<keyword id="KW-0256">Endoplasmic reticulum</keyword>
<keyword id="KW-0967">Endosome</keyword>
<keyword id="KW-0378">Hydrolase</keyword>
<keyword id="KW-0472">Membrane</keyword>
<keyword id="KW-0597">Phosphoprotein</keyword>
<keyword id="KW-0645">Protease</keyword>
<keyword id="KW-1185">Reference proteome</keyword>
<keyword id="KW-0677">Repeat</keyword>
<keyword id="KW-0732">Signal</keyword>
<keyword id="KW-0788">Thiol protease</keyword>
<keyword id="KW-0812">Transmembrane</keyword>
<keyword id="KW-1133">Transmembrane helix</keyword>
<protein>
    <recommendedName>
        <fullName>Calpain-type cysteine protease ADL1</fullName>
        <ecNumber>3.4.22.-</ecNumber>
    </recommendedName>
    <alternativeName>
        <fullName>Phytocalpain ADL1</fullName>
    </alternativeName>
    <alternativeName>
        <fullName>Protein ADAXIALIZED LEAF1</fullName>
    </alternativeName>
    <alternativeName>
        <fullName>Protein DEFECTIVE KERNEL 1</fullName>
        <shortName>OsDEK1</shortName>
    </alternativeName>
    <alternativeName>
        <fullName>Protein SHOOTLESS 3</fullName>
    </alternativeName>
</protein>
<reference key="1">
    <citation type="journal article" date="2009" name="Dev. Biol.">
        <title>The ADAXIALIZED LEAF1 gene functions in leaf and embryonic pattern formation in rice.</title>
        <authorList>
            <person name="Hibara K."/>
            <person name="Obara M."/>
            <person name="Hayashida E."/>
            <person name="Abe M."/>
            <person name="Ishimaru T."/>
            <person name="Satoh H."/>
            <person name="Itoh J."/>
            <person name="Nagato Y."/>
        </authorList>
    </citation>
    <scope>NUCLEOTIDE SEQUENCE [MRNA]</scope>
    <scope>FUNCTION</scope>
    <scope>DISRUPTION PHENOTYPE</scope>
    <scope>TISSUE SPECIFICITY</scope>
    <source>
        <strain>cv. Taichung 65</strain>
    </source>
</reference>
<reference key="2">
    <citation type="journal article" date="2002" name="Proc. Natl. Acad. Sci. U.S.A.">
        <title>The defective kernel 1 (dek1) gene required for aleurone cell development in the endosperm of maize grains encodes a membrane protein of the calpain gene superfamily.</title>
        <authorList>
            <person name="Lid S.E."/>
            <person name="Gruis D."/>
            <person name="Jung R."/>
            <person name="Lorentzen J.A."/>
            <person name="Ananiev E."/>
            <person name="Chamberlin M."/>
            <person name="Niu X."/>
            <person name="Meeley R."/>
            <person name="Nichols S."/>
            <person name="Olsen O.-A."/>
        </authorList>
    </citation>
    <scope>NUCLEOTIDE SEQUENCE [MRNA]</scope>
</reference>
<reference key="3">
    <citation type="journal article" date="2005" name="Nature">
        <title>The map-based sequence of the rice genome.</title>
        <authorList>
            <consortium name="International rice genome sequencing project (IRGSP)"/>
        </authorList>
    </citation>
    <scope>NUCLEOTIDE SEQUENCE [LARGE SCALE GENOMIC DNA]</scope>
    <source>
        <strain>cv. Nipponbare</strain>
    </source>
</reference>
<reference key="4">
    <citation type="journal article" date="2008" name="Nucleic Acids Res.">
        <title>The rice annotation project database (RAP-DB): 2008 update.</title>
        <authorList>
            <consortium name="The rice annotation project (RAP)"/>
        </authorList>
    </citation>
    <scope>GENOME REANNOTATION</scope>
    <source>
        <strain>cv. Nipponbare</strain>
    </source>
</reference>
<reference key="5">
    <citation type="journal article" date="2013" name="Rice">
        <title>Improvement of the Oryza sativa Nipponbare reference genome using next generation sequence and optical map data.</title>
        <authorList>
            <person name="Kawahara Y."/>
            <person name="de la Bastide M."/>
            <person name="Hamilton J.P."/>
            <person name="Kanamori H."/>
            <person name="McCombie W.R."/>
            <person name="Ouyang S."/>
            <person name="Schwartz D.C."/>
            <person name="Tanaka T."/>
            <person name="Wu J."/>
            <person name="Zhou S."/>
            <person name="Childs K.L."/>
            <person name="Davidson R.M."/>
            <person name="Lin H."/>
            <person name="Quesada-Ocampo L."/>
            <person name="Vaillancourt B."/>
            <person name="Sakai H."/>
            <person name="Lee S.S."/>
            <person name="Kim J."/>
            <person name="Numa H."/>
            <person name="Itoh T."/>
            <person name="Buell C.R."/>
            <person name="Matsumoto T."/>
        </authorList>
    </citation>
    <scope>GENOME REANNOTATION</scope>
    <source>
        <strain>cv. Nipponbare</strain>
    </source>
</reference>
<reference key="6">
    <citation type="journal article" date="1995" name="Dev. Genet.">
        <title>Phenotypic diversity of 188 rice embryo mutants.</title>
        <authorList>
            <person name="Hong S.K."/>
            <person name="Aoki T."/>
            <person name="Kitano H."/>
            <person name="Satoh H."/>
            <person name="Nagato Y."/>
        </authorList>
    </citation>
    <scope>FUNCTION</scope>
    <scope>DISRUPTION PHENOTYPE</scope>
    <scope>MUTAGENESIS OF TRP-1841</scope>
</reference>
<reference key="7">
    <citation type="journal article" date="1999" name="Development">
        <title>Initiation of shoot apical meristem in rice: characterization of four SHOOTLESS genes.</title>
        <authorList>
            <person name="Satoh N."/>
            <person name="Hong S.-K."/>
            <person name="Nishimura A."/>
            <person name="Matsuoka M."/>
            <person name="Kitano H."/>
            <person name="Nagato Y."/>
        </authorList>
    </citation>
    <scope>FUNCTION</scope>
    <scope>DISRUPTION PHENOTYPE</scope>
    <scope>MUTAGENESIS OF SER-1776</scope>
    <source>
        <strain>cv. Taichung 65</strain>
    </source>
</reference>
<gene>
    <name type="primary">ADL1</name>
    <name type="synonym">DEK1</name>
    <name type="synonym">ODM63</name>
    <name type="synonym">SHL3</name>
    <name type="ordered locus">Os02g0709400</name>
    <name type="ordered locus">LOC_Os02g47970</name>
    <name type="ORF">OJ1311_H06.4</name>
</gene>
<evidence type="ECO:0000250" key="1"/>
<evidence type="ECO:0000255" key="2"/>
<evidence type="ECO:0000255" key="3">
    <source>
        <dbReference type="PROSITE-ProRule" id="PRU00239"/>
    </source>
</evidence>
<evidence type="ECO:0000256" key="4">
    <source>
        <dbReference type="SAM" id="MobiDB-lite"/>
    </source>
</evidence>
<evidence type="ECO:0000269" key="5">
    <source>
    </source>
</evidence>
<evidence type="ECO:0000269" key="6">
    <source>
    </source>
</evidence>
<evidence type="ECO:0000269" key="7">
    <source ref="6"/>
</evidence>
<evidence type="ECO:0000305" key="8"/>
<sequence length="2162" mass="239859">MEEEEHRGVVLVCSICGFLFAVLGPLSFWILWAVNWRPWRLYSWIYARKWPAYVQGPQLSTLCSFFTLFAWLVVVSPITVLLVWGGILIALLERNIIGLAVIMVGVALLLSFYSIMLWWRTQWQSSKAVAYLLLLAVGLLCAYEFCAVYVTTGASASELNSPSGFFFGVSAISLAINMLFISKILFNGSGFDVDEYVRRLYKFAYSDCVEVAPVSCSPDPPDPSELYMTKSSRVLHLGLLYLCSLMVLVVYSILYGLTSKEARWLGALTSVAVVILDWNLGLCSFRFELLKSRMIALFVAGTSRVFLICFGVHYWYLGHCISYAFVASVLLAAAVSCWLSISNPSVARIDALRSTVIKLREGFRRKGQTSSSNSSDGCGSSVKRSSGSVEAGPHGNATDSMYRSNSQSDCVNWNNVPFDRSNSCQEGQSSDKNIDSGRASLAHRSNSCLSAVAVQDPETAVVSADRHGDPTASLVVCSSSGLESQGCESSGSATASGNQQLLDLNLAAIFQDRLNDPRITSMLKRNGGLGDVELANLLQDKGLDPNFSYMMKDKVMDPRILALLQRSSLDADREHQDDVDVTGTDSDRLDTTIANQISLSEELRRSGLENWLNLSRLMFHQVAGSPIRAFVVFTLIFIIETVTVAVHRPKPIKVINATHEQFEFGFSILLLSPVVCSIMAFIWSLCAEEMTMTSKPRKYGFIAWLLSTCVGLLLSFLSKSSVILGLSLTVPLMVACLSFAIPIWMRNGYRFWIPGGELDSRENIRQAPGKKERALFAISITVFTASVIGLGAIVSAKPLDALGYKGWDADKKSFYSPYATSMYLGWALSSTIAVLATGVIPIVAWFATYRFSPSSAICVGLFATVLVSFCGVSYWGVVNSRQDGVPLKADFLAALLPLLCIPAVFSLFTGMYKWKDDDWKISRGVYLFVGMGVLLLLGAISAVIVTIRPWTVGVACLLVILFLVFAIGVIHYWTSNNFYLTRTQMLLVCSLAFLLALAAFLMGLFQEKPFVGASIGYFSFLFLLTGRALTVLLSPPIVVYSPRVLPVYVYDAHADSAKNVSYAFLILYGIALATEVWGVIASLILNPPFIGAAISAITLVIAFSFAVSRPCLTLKMLEDAVHFLSKDTVVQAMSRSANKTRNAISGTYSAPQRSASSAALLVGDPAITLDRAGNFVLPRADVMKLRDRLRNEEITAGSFFCGVKNCLMIGSPVDVDYRRNMCAHARILALEEAIDTEWVYMWDKFGGYLLLLLGLTAKAEQIQDEVRLRLFLDSIGLSDLSAKEIKKWMPEDRRHFELIQESYIREKEMEEEVLMQRREEEGKGRERRKALLEREERKWKELEISLLSSIPNAGSRDAAAMAAAVRAVGGDSALEDSFARDRVSSIARHIRKAQLARRAEQTGIPDTVCILDDEPRSTGRHCGEIDLCLCESKKVSFSIAVMVQPVSGPVCLFGTEFQKKVCWEILVAGSEQGMEAGQVGLRLVTKGERMTTVAKEWNIGASSIADGRWHLVTVTIDADLGEATSFIDGVYDGYQNALPLPRNNGIWEPGTDIWVGARPPTDLDAFGRSDSEGSDSKMQIMDAFLWGRCLTEDEVAMLHTAICSAEYGLFDLAAEDAWHGSYSARVDDWESEEANFELYDQEDVEWDGQYSSGRKRHARDSVAIDIDSFARRPRKPRFETREEVNQRMLSVERAVREALIAKGERNFTDQEFPPDDRSLFVDPMNPSLKLQVVSEWMRPSDIAKEVSISSQPCLFSGSVNSSDVCQGRLGDCWFLSAVAVLTEMARISEVIITPEYNEEGIYTVRFCIQGEWVAVVVDDWIPCESPGKPAFATSRKQNELWVSILEKAYAKLHGSYEALEGGLVQDALVDLTGGAGEEIDMRSPQAQIDLASGRLWSQLLHFKQEGFLLGAGSPSGSDAHISSSGIVQGHAYSILQVREVDGHKLVQIRNPWANEVEWNGPWSDSSQEWTERMKHKLKHVPQSKNGVFWMSWQDFQIHFRSIYVCRVYPPEMRYSVHGQWRGYSAGGCQDYDSWHQNPQYRLRVTGRDALYPVHVFITLTQGVGFSRKTNGFRNYQSSHDSSMFYIGMRILKTRGCRAAYNIYMHESVGGTDYVNSREISCELVLEPYPKGYTIVPTTIHPGEEAPFVLSVFTKAPIKLEAV</sequence>